<reference key="1">
    <citation type="journal article" date="1997" name="J. Bacteriol.">
        <title>Complete genome sequence of Methanobacterium thermoautotrophicum deltaH: functional analysis and comparative genomics.</title>
        <authorList>
            <person name="Smith D.R."/>
            <person name="Doucette-Stamm L.A."/>
            <person name="Deloughery C."/>
            <person name="Lee H.-M."/>
            <person name="Dubois J."/>
            <person name="Aldredge T."/>
            <person name="Bashirzadeh R."/>
            <person name="Blakely D."/>
            <person name="Cook R."/>
            <person name="Gilbert K."/>
            <person name="Harrison D."/>
            <person name="Hoang L."/>
            <person name="Keagle P."/>
            <person name="Lumm W."/>
            <person name="Pothier B."/>
            <person name="Qiu D."/>
            <person name="Spadafora R."/>
            <person name="Vicare R."/>
            <person name="Wang Y."/>
            <person name="Wierzbowski J."/>
            <person name="Gibson R."/>
            <person name="Jiwani N."/>
            <person name="Caruso A."/>
            <person name="Bush D."/>
            <person name="Safer H."/>
            <person name="Patwell D."/>
            <person name="Prabhakar S."/>
            <person name="McDougall S."/>
            <person name="Shimer G."/>
            <person name="Goyal A."/>
            <person name="Pietrovski S."/>
            <person name="Church G.M."/>
            <person name="Daniels C.J."/>
            <person name="Mao J.-I."/>
            <person name="Rice P."/>
            <person name="Noelling J."/>
            <person name="Reeve J.N."/>
        </authorList>
    </citation>
    <scope>NUCLEOTIDE SEQUENCE [LARGE SCALE GENOMIC DNA]</scope>
    <source>
        <strain>ATCC 29096 / DSM 1053 / JCM 10044 / NBRC 100330 / Delta H</strain>
    </source>
</reference>
<dbReference type="EMBL" id="AE000666">
    <property type="protein sequence ID" value="AAB84521.1"/>
    <property type="molecule type" value="Genomic_DNA"/>
</dbReference>
<dbReference type="PIR" id="C69124">
    <property type="entry name" value="C69124"/>
</dbReference>
<dbReference type="SMR" id="O26110"/>
<dbReference type="FunCoup" id="O26110">
    <property type="interactions" value="125"/>
</dbReference>
<dbReference type="STRING" id="187420.MTH_2"/>
<dbReference type="PaxDb" id="187420-MTH_2"/>
<dbReference type="EnsemblBacteria" id="AAB84521">
    <property type="protein sequence ID" value="AAB84521"/>
    <property type="gene ID" value="MTH_2"/>
</dbReference>
<dbReference type="KEGG" id="mth:MTH_2"/>
<dbReference type="PATRIC" id="fig|187420.15.peg.2"/>
<dbReference type="HOGENOM" id="CLU_033361_2_0_2"/>
<dbReference type="InParanoid" id="O26110"/>
<dbReference type="Proteomes" id="UP000005223">
    <property type="component" value="Chromosome"/>
</dbReference>
<dbReference type="GO" id="GO:0022625">
    <property type="term" value="C:cytosolic large ribosomal subunit"/>
    <property type="evidence" value="ECO:0007669"/>
    <property type="project" value="TreeGrafter"/>
</dbReference>
<dbReference type="GO" id="GO:0019843">
    <property type="term" value="F:rRNA binding"/>
    <property type="evidence" value="ECO:0007669"/>
    <property type="project" value="UniProtKB-UniRule"/>
</dbReference>
<dbReference type="GO" id="GO:0003735">
    <property type="term" value="F:structural constituent of ribosome"/>
    <property type="evidence" value="ECO:0007669"/>
    <property type="project" value="InterPro"/>
</dbReference>
<dbReference type="GO" id="GO:0006412">
    <property type="term" value="P:translation"/>
    <property type="evidence" value="ECO:0007669"/>
    <property type="project" value="UniProtKB-UniRule"/>
</dbReference>
<dbReference type="Gene3D" id="3.30.1430.10">
    <property type="match status" value="1"/>
</dbReference>
<dbReference type="Gene3D" id="4.10.960.10">
    <property type="entry name" value="Ribosomal protein L3, domain 3"/>
    <property type="match status" value="1"/>
</dbReference>
<dbReference type="Gene3D" id="2.40.30.10">
    <property type="entry name" value="Translation factors"/>
    <property type="match status" value="1"/>
</dbReference>
<dbReference type="HAMAP" id="MF_01325_A">
    <property type="entry name" value="Ribosomal_uL3_A"/>
    <property type="match status" value="1"/>
</dbReference>
<dbReference type="InterPro" id="IPR045077">
    <property type="entry name" value="L3_arc_euk"/>
</dbReference>
<dbReference type="InterPro" id="IPR044892">
    <property type="entry name" value="Ribosomal_L3_dom_3_arc_sf"/>
</dbReference>
<dbReference type="InterPro" id="IPR000597">
    <property type="entry name" value="Ribosomal_uL3"/>
</dbReference>
<dbReference type="InterPro" id="IPR019928">
    <property type="entry name" value="Ribosomal_uL3_arc"/>
</dbReference>
<dbReference type="InterPro" id="IPR019926">
    <property type="entry name" value="Ribosomal_uL3_CS"/>
</dbReference>
<dbReference type="InterPro" id="IPR009000">
    <property type="entry name" value="Transl_B-barrel_sf"/>
</dbReference>
<dbReference type="NCBIfam" id="TIGR03626">
    <property type="entry name" value="L3_arch"/>
    <property type="match status" value="1"/>
</dbReference>
<dbReference type="NCBIfam" id="NF003261">
    <property type="entry name" value="PRK04231.1"/>
    <property type="match status" value="1"/>
</dbReference>
<dbReference type="PANTHER" id="PTHR11363">
    <property type="entry name" value="60S RIBOSOMAL PROTEIN L3-RELATED"/>
    <property type="match status" value="1"/>
</dbReference>
<dbReference type="PANTHER" id="PTHR11363:SF5">
    <property type="entry name" value="LARGE RIBOSOMAL SUBUNIT PROTEIN UL3"/>
    <property type="match status" value="1"/>
</dbReference>
<dbReference type="Pfam" id="PF00297">
    <property type="entry name" value="Ribosomal_L3"/>
    <property type="match status" value="1"/>
</dbReference>
<dbReference type="SUPFAM" id="SSF50447">
    <property type="entry name" value="Translation proteins"/>
    <property type="match status" value="1"/>
</dbReference>
<dbReference type="PROSITE" id="PS00474">
    <property type="entry name" value="RIBOSOMAL_L3"/>
    <property type="match status" value="1"/>
</dbReference>
<sequence>MARHHQPRKGSVAFSPRKRAARETPRVKSWPQVDEPGLLALAGYKAGMTHVMMVDNQKNSPTEGMEVSTPVTILEVPPLTVMAVRTYEKTSRGLKTLGEVLATETKDDLRRKLTPPADDYDQEAAIEKIRSNMEYVADVRVIVHTNPRLASVPKKKPEVFECGLGGKTPEEKFEYALEILGKDVRASEIFSEGAFVDAIAVTKGKGFQGPVKRWGIRIQYGKAARSSKGRHIGSLGPWTPSRTMWTVPQAGQMGYHRRTEYNKQILKIGDASEADLVNPDGGFVRYGLVRNDYVMIKGSVPGPTKRLVVLRKAIRAAGKQEEAPQINYISTASKQGV</sequence>
<feature type="chain" id="PRO_0000077213" description="Large ribosomal subunit protein uL3">
    <location>
        <begin position="1"/>
        <end position="337"/>
    </location>
</feature>
<feature type="region of interest" description="Disordered" evidence="2">
    <location>
        <begin position="1"/>
        <end position="29"/>
    </location>
</feature>
<comment type="function">
    <text evidence="1">One of the primary rRNA binding proteins, it binds directly near the 3'-end of the 23S rRNA, where it nucleates assembly of the 50S subunit.</text>
</comment>
<comment type="subunit">
    <text evidence="1">Part of the 50S ribosomal subunit. Forms a cluster with proteins L14 and L24e.</text>
</comment>
<comment type="similarity">
    <text evidence="1">Belongs to the universal ribosomal protein uL3 family.</text>
</comment>
<evidence type="ECO:0000255" key="1">
    <source>
        <dbReference type="HAMAP-Rule" id="MF_01325"/>
    </source>
</evidence>
<evidence type="ECO:0000256" key="2">
    <source>
        <dbReference type="SAM" id="MobiDB-lite"/>
    </source>
</evidence>
<evidence type="ECO:0000305" key="3"/>
<protein>
    <recommendedName>
        <fullName evidence="1">Large ribosomal subunit protein uL3</fullName>
    </recommendedName>
    <alternativeName>
        <fullName evidence="3">50S ribosomal protein L3</fullName>
    </alternativeName>
</protein>
<proteinExistence type="inferred from homology"/>
<gene>
    <name evidence="1" type="primary">rpl3</name>
    <name type="ordered locus">MTH_2</name>
</gene>
<name>RL3_METTH</name>
<organism>
    <name type="scientific">Methanothermobacter thermautotrophicus (strain ATCC 29096 / DSM 1053 / JCM 10044 / NBRC 100330 / Delta H)</name>
    <name type="common">Methanobacterium thermoautotrophicum</name>
    <dbReference type="NCBI Taxonomy" id="187420"/>
    <lineage>
        <taxon>Archaea</taxon>
        <taxon>Methanobacteriati</taxon>
        <taxon>Methanobacteriota</taxon>
        <taxon>Methanomada group</taxon>
        <taxon>Methanobacteria</taxon>
        <taxon>Methanobacteriales</taxon>
        <taxon>Methanobacteriaceae</taxon>
        <taxon>Methanothermobacter</taxon>
    </lineage>
</organism>
<accession>O26110</accession>
<keyword id="KW-1185">Reference proteome</keyword>
<keyword id="KW-0687">Ribonucleoprotein</keyword>
<keyword id="KW-0689">Ribosomal protein</keyword>
<keyword id="KW-0694">RNA-binding</keyword>
<keyword id="KW-0699">rRNA-binding</keyword>